<protein>
    <recommendedName>
        <fullName evidence="1">ATP synthase subunit b 1</fullName>
    </recommendedName>
    <alternativeName>
        <fullName evidence="1">ATP synthase F(0) sector subunit b 1</fullName>
    </alternativeName>
    <alternativeName>
        <fullName evidence="1">ATPase subunit I 1</fullName>
    </alternativeName>
    <alternativeName>
        <fullName evidence="1">F-type ATPase subunit b 1</fullName>
        <shortName evidence="1">F-ATPase subunit b 1</shortName>
    </alternativeName>
</protein>
<feature type="chain" id="PRO_0000368372" description="ATP synthase subunit b 1">
    <location>
        <begin position="1"/>
        <end position="208"/>
    </location>
</feature>
<feature type="transmembrane region" description="Helical" evidence="1">
    <location>
        <begin position="56"/>
        <end position="78"/>
    </location>
</feature>
<feature type="region of interest" description="Disordered" evidence="2">
    <location>
        <begin position="1"/>
        <end position="26"/>
    </location>
</feature>
<feature type="compositionally biased region" description="Polar residues" evidence="2">
    <location>
        <begin position="1"/>
        <end position="18"/>
    </location>
</feature>
<proteinExistence type="inferred from homology"/>
<name>ATPF1_BRUO2</name>
<evidence type="ECO:0000255" key="1">
    <source>
        <dbReference type="HAMAP-Rule" id="MF_01398"/>
    </source>
</evidence>
<evidence type="ECO:0000256" key="2">
    <source>
        <dbReference type="SAM" id="MobiDB-lite"/>
    </source>
</evidence>
<reference key="1">
    <citation type="journal article" date="2009" name="PLoS ONE">
        <title>Genome degradation in Brucella ovis corresponds with narrowing of its host range and tissue tropism.</title>
        <authorList>
            <person name="Tsolis R.M."/>
            <person name="Seshadri R."/>
            <person name="Santos R.L."/>
            <person name="Sangari F.J."/>
            <person name="Lobo J.M."/>
            <person name="de Jong M.F."/>
            <person name="Ren Q."/>
            <person name="Myers G."/>
            <person name="Brinkac L.M."/>
            <person name="Nelson W.C."/>
            <person name="Deboy R.T."/>
            <person name="Angiuoli S."/>
            <person name="Khouri H."/>
            <person name="Dimitrov G."/>
            <person name="Robinson J.R."/>
            <person name="Mulligan S."/>
            <person name="Walker R.L."/>
            <person name="Elzer P.E."/>
            <person name="Hassan K.A."/>
            <person name="Paulsen I.T."/>
        </authorList>
    </citation>
    <scope>NUCLEOTIDE SEQUENCE [LARGE SCALE GENOMIC DNA]</scope>
    <source>
        <strain>ATCC 25840 / 63/290 / NCTC 10512</strain>
    </source>
</reference>
<dbReference type="EMBL" id="CP000708">
    <property type="protein sequence ID" value="ABQ61216.1"/>
    <property type="molecule type" value="Genomic_DNA"/>
</dbReference>
<dbReference type="RefSeq" id="WP_002963545.1">
    <property type="nucleotide sequence ID" value="NC_009505.1"/>
</dbReference>
<dbReference type="SMR" id="A5VNW4"/>
<dbReference type="KEGG" id="bov:BOV_0396"/>
<dbReference type="HOGENOM" id="CLU_079215_1_2_5"/>
<dbReference type="PhylomeDB" id="A5VNW4"/>
<dbReference type="Proteomes" id="UP000006383">
    <property type="component" value="Chromosome I"/>
</dbReference>
<dbReference type="GO" id="GO:0005886">
    <property type="term" value="C:plasma membrane"/>
    <property type="evidence" value="ECO:0007669"/>
    <property type="project" value="UniProtKB-SubCell"/>
</dbReference>
<dbReference type="GO" id="GO:0045259">
    <property type="term" value="C:proton-transporting ATP synthase complex"/>
    <property type="evidence" value="ECO:0007669"/>
    <property type="project" value="UniProtKB-KW"/>
</dbReference>
<dbReference type="GO" id="GO:0046933">
    <property type="term" value="F:proton-transporting ATP synthase activity, rotational mechanism"/>
    <property type="evidence" value="ECO:0007669"/>
    <property type="project" value="UniProtKB-UniRule"/>
</dbReference>
<dbReference type="GO" id="GO:0046961">
    <property type="term" value="F:proton-transporting ATPase activity, rotational mechanism"/>
    <property type="evidence" value="ECO:0007669"/>
    <property type="project" value="TreeGrafter"/>
</dbReference>
<dbReference type="CDD" id="cd06503">
    <property type="entry name" value="ATP-synt_Fo_b"/>
    <property type="match status" value="1"/>
</dbReference>
<dbReference type="Gene3D" id="6.10.250.1580">
    <property type="match status" value="1"/>
</dbReference>
<dbReference type="HAMAP" id="MF_01398">
    <property type="entry name" value="ATP_synth_b_bprime"/>
    <property type="match status" value="1"/>
</dbReference>
<dbReference type="InterPro" id="IPR002146">
    <property type="entry name" value="ATP_synth_b/b'su_bac/chlpt"/>
</dbReference>
<dbReference type="InterPro" id="IPR050059">
    <property type="entry name" value="ATP_synthase_B_chain"/>
</dbReference>
<dbReference type="NCBIfam" id="NF006612">
    <property type="entry name" value="PRK09174.1"/>
    <property type="match status" value="1"/>
</dbReference>
<dbReference type="PANTHER" id="PTHR33445:SF1">
    <property type="entry name" value="ATP SYNTHASE SUBUNIT B"/>
    <property type="match status" value="1"/>
</dbReference>
<dbReference type="PANTHER" id="PTHR33445">
    <property type="entry name" value="ATP SYNTHASE SUBUNIT B', CHLOROPLASTIC"/>
    <property type="match status" value="1"/>
</dbReference>
<dbReference type="Pfam" id="PF00430">
    <property type="entry name" value="ATP-synt_B"/>
    <property type="match status" value="1"/>
</dbReference>
<accession>A5VNW4</accession>
<sequence>MFVSTAFAQTATESQPASTAGEHGAADAVHTETGVAHDAGHGSGVFPPFDSTHYASQVLWLAITFGLFYLFLSRVVLPRIGGVIETRRDRIAQDLEQAARLKQDADNAIAAYEQELAQARSKAASIAEAAREKGKGEADAERASAEAVLESKLKEAEERIAAIKAKAMSDVGNIAEETTATIVEQLLGLTADKASVSEAVKAIRASNA</sequence>
<gene>
    <name evidence="1" type="primary">atpF1</name>
    <name type="ordered locus">BOV_0396</name>
</gene>
<comment type="function">
    <text evidence="1">F(1)F(0) ATP synthase produces ATP from ADP in the presence of a proton or sodium gradient. F-type ATPases consist of two structural domains, F(1) containing the extramembraneous catalytic core and F(0) containing the membrane proton channel, linked together by a central stalk and a peripheral stalk. During catalysis, ATP synthesis in the catalytic domain of F(1) is coupled via a rotary mechanism of the central stalk subunits to proton translocation.</text>
</comment>
<comment type="function">
    <text evidence="1">Component of the F(0) channel, it forms part of the peripheral stalk, linking F(1) to F(0).</text>
</comment>
<comment type="subunit">
    <text evidence="1">F-type ATPases have 2 components, F(1) - the catalytic core - and F(0) - the membrane proton channel. F(1) has five subunits: alpha(3), beta(3), gamma(1), delta(1), epsilon(1). F(0) has three main subunits: a(1), b(2) and c(10-14). The alpha and beta chains form an alternating ring which encloses part of the gamma chain. F(1) is attached to F(0) by a central stalk formed by the gamma and epsilon chains, while a peripheral stalk is formed by the delta and b chains.</text>
</comment>
<comment type="subcellular location">
    <subcellularLocation>
        <location evidence="1">Cell inner membrane</location>
        <topology evidence="1">Single-pass membrane protein</topology>
    </subcellularLocation>
</comment>
<comment type="similarity">
    <text evidence="1">Belongs to the ATPase B chain family.</text>
</comment>
<organism>
    <name type="scientific">Brucella ovis (strain ATCC 25840 / 63/290 / NCTC 10512)</name>
    <dbReference type="NCBI Taxonomy" id="444178"/>
    <lineage>
        <taxon>Bacteria</taxon>
        <taxon>Pseudomonadati</taxon>
        <taxon>Pseudomonadota</taxon>
        <taxon>Alphaproteobacteria</taxon>
        <taxon>Hyphomicrobiales</taxon>
        <taxon>Brucellaceae</taxon>
        <taxon>Brucella/Ochrobactrum group</taxon>
        <taxon>Brucella</taxon>
    </lineage>
</organism>
<keyword id="KW-0066">ATP synthesis</keyword>
<keyword id="KW-0997">Cell inner membrane</keyword>
<keyword id="KW-1003">Cell membrane</keyword>
<keyword id="KW-0138">CF(0)</keyword>
<keyword id="KW-0375">Hydrogen ion transport</keyword>
<keyword id="KW-0406">Ion transport</keyword>
<keyword id="KW-0472">Membrane</keyword>
<keyword id="KW-0812">Transmembrane</keyword>
<keyword id="KW-1133">Transmembrane helix</keyword>
<keyword id="KW-0813">Transport</keyword>